<gene>
    <name evidence="1" type="primary">spxH</name>
    <name type="ordered locus">BCE_1316</name>
</gene>
<proteinExistence type="inferred from homology"/>
<feature type="chain" id="PRO_0000278675" description="ClpXP adapter protein SpxH">
    <location>
        <begin position="1"/>
        <end position="297"/>
    </location>
</feature>
<name>SPXH_BACC1</name>
<sequence>MDKQEAKHINMPSPSACEHKSVEAYLFIDPLCKDCWEIEPFIIKLWLEYGKYFSIRHIVTGKVDGTNASSHKWNKPANIRFVWEKTTSLQGFSCDGKVHMQEASSTPYLVSMAIKAAELQGRKAGSKFLRKLQEYIFLENVSNPDCELLLACAKDSNIDVEEFKKDLYSASAKKAFQCDLKFTNEMHITEIPSLVFFHANSDEEGIKIAGTYSYDVYVQLLKELVKCEIEPEPLPPLEVLLEATQFISSKEVAFIYDCSKQEIERELKKLQLKRKVQMIDVKCERYWKWIAKEKDLV</sequence>
<protein>
    <recommendedName>
        <fullName evidence="1">ClpXP adapter protein SpxH</fullName>
    </recommendedName>
</protein>
<reference key="1">
    <citation type="journal article" date="2004" name="Nucleic Acids Res.">
        <title>The genome sequence of Bacillus cereus ATCC 10987 reveals metabolic adaptations and a large plasmid related to Bacillus anthracis pXO1.</title>
        <authorList>
            <person name="Rasko D.A."/>
            <person name="Ravel J."/>
            <person name="Oekstad O.A."/>
            <person name="Helgason E."/>
            <person name="Cer R.Z."/>
            <person name="Jiang L."/>
            <person name="Shores K.A."/>
            <person name="Fouts D.E."/>
            <person name="Tourasse N.J."/>
            <person name="Angiuoli S.V."/>
            <person name="Kolonay J.F."/>
            <person name="Nelson W.C."/>
            <person name="Kolstoe A.-B."/>
            <person name="Fraser C.M."/>
            <person name="Read T.D."/>
        </authorList>
    </citation>
    <scope>NUCLEOTIDE SEQUENCE [LARGE SCALE GENOMIC DNA]</scope>
    <source>
        <strain>ATCC 10987 / NRS 248</strain>
    </source>
</reference>
<evidence type="ECO:0000255" key="1">
    <source>
        <dbReference type="HAMAP-Rule" id="MF_02245"/>
    </source>
</evidence>
<comment type="function">
    <text evidence="1">Adapter protein required for efficient degradation of Spx by ClpXP under non-stress conditions. Interaction with Spx stabilizes Spx and exposes the C-terminus of Spx for recognition and proteolysis by ClpXP.</text>
</comment>
<comment type="subunit">
    <text evidence="1">Interacts with Spx.</text>
</comment>
<comment type="subcellular location">
    <subcellularLocation>
        <location evidence="1">Cytoplasm</location>
    </subcellularLocation>
</comment>
<comment type="similarity">
    <text evidence="1">Belongs to the SpxH family.</text>
</comment>
<accession>Q73BV2</accession>
<keyword id="KW-0963">Cytoplasm</keyword>
<organism>
    <name type="scientific">Bacillus cereus (strain ATCC 10987 / NRS 248)</name>
    <dbReference type="NCBI Taxonomy" id="222523"/>
    <lineage>
        <taxon>Bacteria</taxon>
        <taxon>Bacillati</taxon>
        <taxon>Bacillota</taxon>
        <taxon>Bacilli</taxon>
        <taxon>Bacillales</taxon>
        <taxon>Bacillaceae</taxon>
        <taxon>Bacillus</taxon>
        <taxon>Bacillus cereus group</taxon>
    </lineage>
</organism>
<dbReference type="EMBL" id="AE017194">
    <property type="protein sequence ID" value="AAS40245.1"/>
    <property type="molecule type" value="Genomic_DNA"/>
</dbReference>
<dbReference type="SMR" id="Q73BV2"/>
<dbReference type="KEGG" id="bca:BCE_1316"/>
<dbReference type="HOGENOM" id="CLU_069785_0_0_9"/>
<dbReference type="Proteomes" id="UP000002527">
    <property type="component" value="Chromosome"/>
</dbReference>
<dbReference type="GO" id="GO:0005737">
    <property type="term" value="C:cytoplasm"/>
    <property type="evidence" value="ECO:0007669"/>
    <property type="project" value="UniProtKB-SubCell"/>
</dbReference>
<dbReference type="CDD" id="cd03025">
    <property type="entry name" value="DsbA_FrnE_like"/>
    <property type="match status" value="1"/>
</dbReference>
<dbReference type="Gene3D" id="3.40.30.10">
    <property type="entry name" value="Glutaredoxin"/>
    <property type="match status" value="1"/>
</dbReference>
<dbReference type="Gene3D" id="1.10.472.60">
    <property type="entry name" value="putative protein disulfide isomerase domain"/>
    <property type="match status" value="1"/>
</dbReference>
<dbReference type="HAMAP" id="MF_02245">
    <property type="entry name" value="Adapter_SpxH"/>
    <property type="match status" value="1"/>
</dbReference>
<dbReference type="InterPro" id="IPR046404">
    <property type="entry name" value="Adapter_SpxH"/>
</dbReference>
<dbReference type="InterPro" id="IPR036249">
    <property type="entry name" value="Thioredoxin-like_sf"/>
</dbReference>
<dbReference type="PANTHER" id="PTHR13887:SF47">
    <property type="entry name" value="CLPXP ADAPTER PROTEIN SPXH"/>
    <property type="match status" value="1"/>
</dbReference>
<dbReference type="PANTHER" id="PTHR13887">
    <property type="entry name" value="GLUTATHIONE S-TRANSFERASE KAPPA"/>
    <property type="match status" value="1"/>
</dbReference>
<dbReference type="Pfam" id="PF13743">
    <property type="entry name" value="Thioredoxin_5"/>
    <property type="match status" value="1"/>
</dbReference>
<dbReference type="SUPFAM" id="SSF52833">
    <property type="entry name" value="Thioredoxin-like"/>
    <property type="match status" value="1"/>
</dbReference>